<proteinExistence type="inferred from homology"/>
<evidence type="ECO:0000255" key="1">
    <source>
        <dbReference type="HAMAP-Rule" id="MF_00262"/>
    </source>
</evidence>
<organism>
    <name type="scientific">Methylobacterium radiotolerans (strain ATCC 27329 / DSM 1819 / JCM 2831 / NBRC 15690 / NCIMB 10815 / 0-1)</name>
    <dbReference type="NCBI Taxonomy" id="426355"/>
    <lineage>
        <taxon>Bacteria</taxon>
        <taxon>Pseudomonadati</taxon>
        <taxon>Pseudomonadota</taxon>
        <taxon>Alphaproteobacteria</taxon>
        <taxon>Hyphomicrobiales</taxon>
        <taxon>Methylobacteriaceae</taxon>
        <taxon>Methylobacterium</taxon>
    </lineage>
</organism>
<gene>
    <name evidence="1" type="primary">minE</name>
    <name type="ordered locus">Mrad2831_3373</name>
</gene>
<accession>B1LSP9</accession>
<reference key="1">
    <citation type="submission" date="2008-03" db="EMBL/GenBank/DDBJ databases">
        <title>Complete sequence of chromosome of Methylobacterium radiotolerans JCM 2831.</title>
        <authorList>
            <consortium name="US DOE Joint Genome Institute"/>
            <person name="Copeland A."/>
            <person name="Lucas S."/>
            <person name="Lapidus A."/>
            <person name="Glavina del Rio T."/>
            <person name="Dalin E."/>
            <person name="Tice H."/>
            <person name="Bruce D."/>
            <person name="Goodwin L."/>
            <person name="Pitluck S."/>
            <person name="Kiss H."/>
            <person name="Brettin T."/>
            <person name="Detter J.C."/>
            <person name="Han C."/>
            <person name="Kuske C.R."/>
            <person name="Schmutz J."/>
            <person name="Larimer F."/>
            <person name="Land M."/>
            <person name="Hauser L."/>
            <person name="Kyrpides N."/>
            <person name="Mikhailova N."/>
            <person name="Marx C.J."/>
            <person name="Richardson P."/>
        </authorList>
    </citation>
    <scope>NUCLEOTIDE SEQUENCE [LARGE SCALE GENOMIC DNA]</scope>
    <source>
        <strain>ATCC 27329 / DSM 1819 / JCM 2831 / NBRC 15690 / NCIMB 10815 / 0-1</strain>
    </source>
</reference>
<name>MINE_METRJ</name>
<protein>
    <recommendedName>
        <fullName evidence="1">Cell division topological specificity factor</fullName>
    </recommendedName>
</protein>
<dbReference type="EMBL" id="CP001001">
    <property type="protein sequence ID" value="ACB25351.1"/>
    <property type="molecule type" value="Genomic_DNA"/>
</dbReference>
<dbReference type="RefSeq" id="WP_012320315.1">
    <property type="nucleotide sequence ID" value="NC_010505.1"/>
</dbReference>
<dbReference type="SMR" id="B1LSP9"/>
<dbReference type="STRING" id="426355.Mrad2831_3373"/>
<dbReference type="GeneID" id="6139421"/>
<dbReference type="KEGG" id="mrd:Mrad2831_3373"/>
<dbReference type="eggNOG" id="COG0851">
    <property type="taxonomic scope" value="Bacteria"/>
</dbReference>
<dbReference type="HOGENOM" id="CLU_137929_2_0_5"/>
<dbReference type="OrthoDB" id="9802655at2"/>
<dbReference type="Proteomes" id="UP000006589">
    <property type="component" value="Chromosome"/>
</dbReference>
<dbReference type="GO" id="GO:0051301">
    <property type="term" value="P:cell division"/>
    <property type="evidence" value="ECO:0007669"/>
    <property type="project" value="UniProtKB-KW"/>
</dbReference>
<dbReference type="GO" id="GO:0032955">
    <property type="term" value="P:regulation of division septum assembly"/>
    <property type="evidence" value="ECO:0007669"/>
    <property type="project" value="InterPro"/>
</dbReference>
<dbReference type="Gene3D" id="3.30.1070.10">
    <property type="entry name" value="Cell division topological specificity factor MinE"/>
    <property type="match status" value="1"/>
</dbReference>
<dbReference type="HAMAP" id="MF_00262">
    <property type="entry name" value="MinE"/>
    <property type="match status" value="1"/>
</dbReference>
<dbReference type="InterPro" id="IPR005527">
    <property type="entry name" value="MinE"/>
</dbReference>
<dbReference type="InterPro" id="IPR036707">
    <property type="entry name" value="MinE_sf"/>
</dbReference>
<dbReference type="NCBIfam" id="TIGR01215">
    <property type="entry name" value="minE"/>
    <property type="match status" value="1"/>
</dbReference>
<dbReference type="NCBIfam" id="NF001422">
    <property type="entry name" value="PRK00296.1"/>
    <property type="match status" value="1"/>
</dbReference>
<dbReference type="Pfam" id="PF03776">
    <property type="entry name" value="MinE"/>
    <property type="match status" value="1"/>
</dbReference>
<dbReference type="SUPFAM" id="SSF55229">
    <property type="entry name" value="Cell division protein MinE topological specificity domain"/>
    <property type="match status" value="1"/>
</dbReference>
<sequence length="113" mass="11815">MSILGLFQKRSSGAVARDRLQLILAHERAESGRPDLVIQLREEILAVIANHVAVEPDKVKVTLERGEGVSTLGLDIELPLGASGKLDAKLAAKLAEVAANKGGAKPASSKKAA</sequence>
<comment type="function">
    <text evidence="1">Prevents the cell division inhibition by proteins MinC and MinD at internal division sites while permitting inhibition at polar sites. This ensures cell division at the proper site by restricting the formation of a division septum at the midpoint of the long axis of the cell.</text>
</comment>
<comment type="similarity">
    <text evidence="1">Belongs to the MinE family.</text>
</comment>
<keyword id="KW-0131">Cell cycle</keyword>
<keyword id="KW-0132">Cell division</keyword>
<feature type="chain" id="PRO_1000114231" description="Cell division topological specificity factor">
    <location>
        <begin position="1"/>
        <end position="113"/>
    </location>
</feature>